<keyword id="KW-0028">Amino-acid biosynthesis</keyword>
<keyword id="KW-0100">Branched-chain amino acid biosynthesis</keyword>
<keyword id="KW-0428">Leader peptide</keyword>
<keyword id="KW-1185">Reference proteome</keyword>
<accession>P03061</accession>
<accession>Q2M7Y5</accession>
<feature type="peptide" id="PRO_0000044761" description="ilv operon leader peptide">
    <location>
        <begin position="1"/>
        <end position="32"/>
    </location>
</feature>
<dbReference type="EMBL" id="X02541">
    <property type="protein sequence ID" value="CAA26386.1"/>
    <property type="molecule type" value="Genomic_DNA"/>
</dbReference>
<dbReference type="EMBL" id="L10328">
    <property type="protein sequence ID" value="AAA62024.1"/>
    <property type="molecule type" value="Genomic_DNA"/>
</dbReference>
<dbReference type="EMBL" id="U00096">
    <property type="protein sequence ID" value="AAC76695.1"/>
    <property type="molecule type" value="Genomic_DNA"/>
</dbReference>
<dbReference type="EMBL" id="AP009048">
    <property type="protein sequence ID" value="BAE77621.1"/>
    <property type="molecule type" value="Genomic_DNA"/>
</dbReference>
<dbReference type="PIR" id="A03597">
    <property type="entry name" value="LFECIV"/>
</dbReference>
<dbReference type="RefSeq" id="NP_418128.1">
    <property type="nucleotide sequence ID" value="NC_000913.3"/>
</dbReference>
<dbReference type="RefSeq" id="WP_001300753.1">
    <property type="nucleotide sequence ID" value="NZ_SSZK01000043.1"/>
</dbReference>
<dbReference type="BioGRID" id="4259302">
    <property type="interactions" value="2"/>
</dbReference>
<dbReference type="FunCoup" id="P03061">
    <property type="interactions" value="3"/>
</dbReference>
<dbReference type="STRING" id="511145.b3672"/>
<dbReference type="PaxDb" id="511145-b3672"/>
<dbReference type="EnsemblBacteria" id="AAC76695">
    <property type="protein sequence ID" value="AAC76695"/>
    <property type="gene ID" value="b3672"/>
</dbReference>
<dbReference type="GeneID" id="86944339"/>
<dbReference type="GeneID" id="948181"/>
<dbReference type="KEGG" id="ecj:JW3647"/>
<dbReference type="KEGG" id="eco:b3672"/>
<dbReference type="KEGG" id="ecoc:C3026_19900"/>
<dbReference type="EchoBASE" id="EB1253"/>
<dbReference type="eggNOG" id="ENOG5031KVZ">
    <property type="taxonomic scope" value="Bacteria"/>
</dbReference>
<dbReference type="HOGENOM" id="CLU_218700_0_1_6"/>
<dbReference type="InParanoid" id="P03061"/>
<dbReference type="BioCyc" id="EcoCyc:EG11275-MONOMER"/>
<dbReference type="PRO" id="PR:P03061"/>
<dbReference type="Proteomes" id="UP000000625">
    <property type="component" value="Chromosome"/>
</dbReference>
<dbReference type="GO" id="GO:0009099">
    <property type="term" value="P:L-valine biosynthetic process"/>
    <property type="evidence" value="ECO:0000315"/>
    <property type="project" value="EcoCyc"/>
</dbReference>
<dbReference type="InterPro" id="IPR012566">
    <property type="entry name" value="IlvB_leader"/>
</dbReference>
<dbReference type="NCBIfam" id="NF007579">
    <property type="entry name" value="PRK10214.1"/>
    <property type="match status" value="1"/>
</dbReference>
<dbReference type="Pfam" id="PF08049">
    <property type="entry name" value="IlvB_leader"/>
    <property type="match status" value="1"/>
</dbReference>
<reference key="1">
    <citation type="journal article" date="1982" name="Proc. Natl. Acad. Sci. U.S.A.">
        <title>Nucleotide sequence of the ilvB promoter-regulatory region: a biosynthetic operon controlled by attenuation and cyclic AMP.</title>
        <authorList>
            <person name="Friden P."/>
            <person name="Newman T."/>
            <person name="Freundlich M."/>
        </authorList>
    </citation>
    <scope>NUCLEOTIDE SEQUENCE [GENOMIC DNA]</scope>
</reference>
<reference key="2">
    <citation type="journal article" date="1985" name="Nucleic Acids Res.">
        <title>The nucleotide sequence of the ilvBN operon of Escherichia coli: sequence homologies of the acetohydroxy acid synthase isozymes.</title>
        <authorList>
            <person name="Wek R.C."/>
            <person name="Hausser C.A."/>
            <person name="Hatfield G.W."/>
        </authorList>
    </citation>
    <scope>NUCLEOTIDE SEQUENCE [GENOMIC DNA]</scope>
</reference>
<reference key="3">
    <citation type="journal article" date="1993" name="Genomics">
        <title>DNA sequence and analysis of 136 kilobases of the Escherichia coli genome: organizational symmetry around the origin of replication.</title>
        <authorList>
            <person name="Burland V.D."/>
            <person name="Plunkett G. III"/>
            <person name="Daniels D.L."/>
            <person name="Blattner F.R."/>
        </authorList>
    </citation>
    <scope>NUCLEOTIDE SEQUENCE [LARGE SCALE GENOMIC DNA]</scope>
    <source>
        <strain>K12 / MG1655 / ATCC 47076</strain>
    </source>
</reference>
<reference key="4">
    <citation type="journal article" date="1997" name="Science">
        <title>The complete genome sequence of Escherichia coli K-12.</title>
        <authorList>
            <person name="Blattner F.R."/>
            <person name="Plunkett G. III"/>
            <person name="Bloch C.A."/>
            <person name="Perna N.T."/>
            <person name="Burland V."/>
            <person name="Riley M."/>
            <person name="Collado-Vides J."/>
            <person name="Glasner J.D."/>
            <person name="Rode C.K."/>
            <person name="Mayhew G.F."/>
            <person name="Gregor J."/>
            <person name="Davis N.W."/>
            <person name="Kirkpatrick H.A."/>
            <person name="Goeden M.A."/>
            <person name="Rose D.J."/>
            <person name="Mau B."/>
            <person name="Shao Y."/>
        </authorList>
    </citation>
    <scope>NUCLEOTIDE SEQUENCE [LARGE SCALE GENOMIC DNA]</scope>
    <source>
        <strain>K12 / MG1655 / ATCC 47076</strain>
    </source>
</reference>
<reference key="5">
    <citation type="journal article" date="2006" name="Mol. Syst. Biol.">
        <title>Highly accurate genome sequences of Escherichia coli K-12 strains MG1655 and W3110.</title>
        <authorList>
            <person name="Hayashi K."/>
            <person name="Morooka N."/>
            <person name="Yamamoto Y."/>
            <person name="Fujita K."/>
            <person name="Isono K."/>
            <person name="Choi S."/>
            <person name="Ohtsubo E."/>
            <person name="Baba T."/>
            <person name="Wanner B.L."/>
            <person name="Mori H."/>
            <person name="Horiuchi T."/>
        </authorList>
    </citation>
    <scope>NUCLEOTIDE SEQUENCE [LARGE SCALE GENOMIC DNA]</scope>
    <source>
        <strain>K12 / W3110 / ATCC 27325 / DSM 5911</strain>
    </source>
</reference>
<gene>
    <name type="primary">ivbL</name>
    <name type="ordered locus">b3672</name>
    <name type="ordered locus">JW3647</name>
</gene>
<name>LPIV_ECOLI</name>
<sequence length="32" mass="3206">MTTSMLNAKLLPTAPSAAVVVVRVVVVVGNAP</sequence>
<proteinExistence type="predicted"/>
<protein>
    <recommendedName>
        <fullName>ilv operon leader peptide</fullName>
    </recommendedName>
    <alternativeName>
        <fullName>ilvBN operon attenuator peptide</fullName>
    </alternativeName>
</protein>
<organism>
    <name type="scientific">Escherichia coli (strain K12)</name>
    <dbReference type="NCBI Taxonomy" id="83333"/>
    <lineage>
        <taxon>Bacteria</taxon>
        <taxon>Pseudomonadati</taxon>
        <taxon>Pseudomonadota</taxon>
        <taxon>Gammaproteobacteria</taxon>
        <taxon>Enterobacterales</taxon>
        <taxon>Enterobacteriaceae</taxon>
        <taxon>Escherichia</taxon>
    </lineage>
</organism>
<comment type="function">
    <text>This protein is involved in control of the biosynthesis of isoleucine, leucine, and valine.</text>
</comment>